<dbReference type="EC" id="2.6.1.9"/>
<dbReference type="EMBL" id="BA000012">
    <property type="protein sequence ID" value="BAB50406.1"/>
    <property type="molecule type" value="Genomic_DNA"/>
</dbReference>
<dbReference type="RefSeq" id="WP_010911752.1">
    <property type="nucleotide sequence ID" value="NC_002678.2"/>
</dbReference>
<dbReference type="SMR" id="Q98G10"/>
<dbReference type="KEGG" id="mlo:mll3536"/>
<dbReference type="PATRIC" id="fig|266835.9.peg.2817"/>
<dbReference type="eggNOG" id="COG0079">
    <property type="taxonomic scope" value="Bacteria"/>
</dbReference>
<dbReference type="HOGENOM" id="CLU_017584_3_3_5"/>
<dbReference type="UniPathway" id="UPA00031">
    <property type="reaction ID" value="UER00012"/>
</dbReference>
<dbReference type="Proteomes" id="UP000000552">
    <property type="component" value="Chromosome"/>
</dbReference>
<dbReference type="GO" id="GO:0004400">
    <property type="term" value="F:histidinol-phosphate transaminase activity"/>
    <property type="evidence" value="ECO:0007669"/>
    <property type="project" value="UniProtKB-UniRule"/>
</dbReference>
<dbReference type="GO" id="GO:0030170">
    <property type="term" value="F:pyridoxal phosphate binding"/>
    <property type="evidence" value="ECO:0007669"/>
    <property type="project" value="InterPro"/>
</dbReference>
<dbReference type="GO" id="GO:0000105">
    <property type="term" value="P:L-histidine biosynthetic process"/>
    <property type="evidence" value="ECO:0007669"/>
    <property type="project" value="UniProtKB-UniRule"/>
</dbReference>
<dbReference type="CDD" id="cd00609">
    <property type="entry name" value="AAT_like"/>
    <property type="match status" value="1"/>
</dbReference>
<dbReference type="Gene3D" id="3.90.1150.10">
    <property type="entry name" value="Aspartate Aminotransferase, domain 1"/>
    <property type="match status" value="1"/>
</dbReference>
<dbReference type="Gene3D" id="3.40.640.10">
    <property type="entry name" value="Type I PLP-dependent aspartate aminotransferase-like (Major domain)"/>
    <property type="match status" value="1"/>
</dbReference>
<dbReference type="HAMAP" id="MF_01023">
    <property type="entry name" value="HisC_aminotrans_2"/>
    <property type="match status" value="1"/>
</dbReference>
<dbReference type="InterPro" id="IPR004839">
    <property type="entry name" value="Aminotransferase_I/II_large"/>
</dbReference>
<dbReference type="InterPro" id="IPR005861">
    <property type="entry name" value="HisP_aminotrans"/>
</dbReference>
<dbReference type="InterPro" id="IPR050106">
    <property type="entry name" value="HistidinolP_aminotransfase"/>
</dbReference>
<dbReference type="InterPro" id="IPR015424">
    <property type="entry name" value="PyrdxlP-dep_Trfase"/>
</dbReference>
<dbReference type="InterPro" id="IPR015421">
    <property type="entry name" value="PyrdxlP-dep_Trfase_major"/>
</dbReference>
<dbReference type="InterPro" id="IPR015422">
    <property type="entry name" value="PyrdxlP-dep_Trfase_small"/>
</dbReference>
<dbReference type="NCBIfam" id="TIGR01141">
    <property type="entry name" value="hisC"/>
    <property type="match status" value="1"/>
</dbReference>
<dbReference type="PANTHER" id="PTHR43643:SF3">
    <property type="entry name" value="HISTIDINOL-PHOSPHATE AMINOTRANSFERASE"/>
    <property type="match status" value="1"/>
</dbReference>
<dbReference type="PANTHER" id="PTHR43643">
    <property type="entry name" value="HISTIDINOL-PHOSPHATE AMINOTRANSFERASE 2"/>
    <property type="match status" value="1"/>
</dbReference>
<dbReference type="Pfam" id="PF00155">
    <property type="entry name" value="Aminotran_1_2"/>
    <property type="match status" value="1"/>
</dbReference>
<dbReference type="SUPFAM" id="SSF53383">
    <property type="entry name" value="PLP-dependent transferases"/>
    <property type="match status" value="1"/>
</dbReference>
<protein>
    <recommendedName>
        <fullName>Histidinol-phosphate aminotransferase 2</fullName>
        <ecNumber>2.6.1.9</ecNumber>
    </recommendedName>
    <alternativeName>
        <fullName>Imidazole acetol-phosphate transaminase 2</fullName>
    </alternativeName>
</protein>
<sequence>MNQTPDQARPTPRAGIMDIDAYVPGKSAAPAGVAKVYKLSSNENPLGPSPKAIEAAREVAARLDIYPDGTARRLREAIAEVHGLTAQNIICSNGSDEILGLLAQTYLAPGDEAIFTEHAFMVYKIYIQSAGAAPIAVKETDERADIDAMLAAVTPRTKIVFLANPNNPTGTYVPFQEVRRLHAGLPRHVLLVLDAAYAEYVRRNDYEAGIELVRSAENVVMTRTFSKIGLGGARIGWMYAPMHIVDAINRVRGPFNVNATAIEAGIAAIRDRAHVERSVTHNETWLTWLSQEMTGLGLRVTPSVGNFLLIHFPDDQKHSAAAADDYLTARGYILRRVSGYGFPNALRMTVGTEEANRGVVAALTTFLKS</sequence>
<reference key="1">
    <citation type="journal article" date="2000" name="DNA Res.">
        <title>Complete genome structure of the nitrogen-fixing symbiotic bacterium Mesorhizobium loti.</title>
        <authorList>
            <person name="Kaneko T."/>
            <person name="Nakamura Y."/>
            <person name="Sato S."/>
            <person name="Asamizu E."/>
            <person name="Kato T."/>
            <person name="Sasamoto S."/>
            <person name="Watanabe A."/>
            <person name="Idesawa K."/>
            <person name="Ishikawa A."/>
            <person name="Kawashima K."/>
            <person name="Kimura T."/>
            <person name="Kishida Y."/>
            <person name="Kiyokawa C."/>
            <person name="Kohara M."/>
            <person name="Matsumoto M."/>
            <person name="Matsuno A."/>
            <person name="Mochizuki Y."/>
            <person name="Nakayama S."/>
            <person name="Nakazaki N."/>
            <person name="Shimpo S."/>
            <person name="Sugimoto M."/>
            <person name="Takeuchi C."/>
            <person name="Yamada M."/>
            <person name="Tabata S."/>
        </authorList>
    </citation>
    <scope>NUCLEOTIDE SEQUENCE [LARGE SCALE GENOMIC DNA]</scope>
    <source>
        <strain>LMG 29417 / CECT 9101 / MAFF 303099</strain>
    </source>
</reference>
<keyword id="KW-0028">Amino-acid biosynthesis</keyword>
<keyword id="KW-0032">Aminotransferase</keyword>
<keyword id="KW-0368">Histidine biosynthesis</keyword>
<keyword id="KW-0663">Pyridoxal phosphate</keyword>
<keyword id="KW-0808">Transferase</keyword>
<gene>
    <name type="primary">hisC2</name>
    <name type="ordered locus">mll3536</name>
</gene>
<proteinExistence type="inferred from homology"/>
<organism>
    <name type="scientific">Mesorhizobium japonicum (strain LMG 29417 / CECT 9101 / MAFF 303099)</name>
    <name type="common">Mesorhizobium loti (strain MAFF 303099)</name>
    <dbReference type="NCBI Taxonomy" id="266835"/>
    <lineage>
        <taxon>Bacteria</taxon>
        <taxon>Pseudomonadati</taxon>
        <taxon>Pseudomonadota</taxon>
        <taxon>Alphaproteobacteria</taxon>
        <taxon>Hyphomicrobiales</taxon>
        <taxon>Phyllobacteriaceae</taxon>
        <taxon>Mesorhizobium</taxon>
    </lineage>
</organism>
<evidence type="ECO:0000250" key="1"/>
<evidence type="ECO:0000305" key="2"/>
<accession>Q98G10</accession>
<feature type="chain" id="PRO_0000153433" description="Histidinol-phosphate aminotransferase 2">
    <location>
        <begin position="1"/>
        <end position="369"/>
    </location>
</feature>
<feature type="modified residue" description="N6-(pyridoxal phosphate)lysine" evidence="1">
    <location>
        <position position="227"/>
    </location>
</feature>
<comment type="catalytic activity">
    <reaction>
        <text>L-histidinol phosphate + 2-oxoglutarate = 3-(imidazol-4-yl)-2-oxopropyl phosphate + L-glutamate</text>
        <dbReference type="Rhea" id="RHEA:23744"/>
        <dbReference type="ChEBI" id="CHEBI:16810"/>
        <dbReference type="ChEBI" id="CHEBI:29985"/>
        <dbReference type="ChEBI" id="CHEBI:57766"/>
        <dbReference type="ChEBI" id="CHEBI:57980"/>
        <dbReference type="EC" id="2.6.1.9"/>
    </reaction>
</comment>
<comment type="cofactor">
    <cofactor evidence="1">
        <name>pyridoxal 5'-phosphate</name>
        <dbReference type="ChEBI" id="CHEBI:597326"/>
    </cofactor>
</comment>
<comment type="pathway">
    <text>Amino-acid biosynthesis; L-histidine biosynthesis; L-histidine from 5-phospho-alpha-D-ribose 1-diphosphate: step 7/9.</text>
</comment>
<comment type="subunit">
    <text evidence="1">Homodimer.</text>
</comment>
<comment type="similarity">
    <text evidence="2">Belongs to the class-II pyridoxal-phosphate-dependent aminotransferase family. Histidinol-phosphate aminotransferase subfamily.</text>
</comment>
<name>HIS82_RHILO</name>